<name>ARNB_SODGM</name>
<reference key="1">
    <citation type="journal article" date="2006" name="Genome Res.">
        <title>Massive genome erosion and functional adaptations provide insights into the symbiotic lifestyle of Sodalis glossinidius in the tsetse host.</title>
        <authorList>
            <person name="Toh H."/>
            <person name="Weiss B.L."/>
            <person name="Perkin S.A.H."/>
            <person name="Yamashita A."/>
            <person name="Oshima K."/>
            <person name="Hattori M."/>
            <person name="Aksoy S."/>
        </authorList>
    </citation>
    <scope>NUCLEOTIDE SEQUENCE [LARGE SCALE GENOMIC DNA]</scope>
    <source>
        <strain>morsitans</strain>
    </source>
</reference>
<feature type="chain" id="PRO_1000065690" description="UDP-4-amino-4-deoxy-L-arabinose--oxoglutarate aminotransferase">
    <location>
        <begin position="1"/>
        <end position="379"/>
    </location>
</feature>
<feature type="modified residue" description="N6-(pyridoxal phosphate)lysine" evidence="1">
    <location>
        <position position="182"/>
    </location>
</feature>
<comment type="function">
    <text evidence="1">Catalyzes the conversion of UDP-4-keto-arabinose (UDP-Ara4O) to UDP-4-amino-4-deoxy-L-arabinose (UDP-L-Ara4N). The modified arabinose is attached to lipid A and is required for resistance to polymyxin and cationic antimicrobial peptides.</text>
</comment>
<comment type="catalytic activity">
    <reaction evidence="1">
        <text>UDP-4-amino-4-deoxy-beta-L-arabinose + 2-oxoglutarate = UDP-beta-L-threo-pentopyranos-4-ulose + L-glutamate</text>
        <dbReference type="Rhea" id="RHEA:24710"/>
        <dbReference type="ChEBI" id="CHEBI:16810"/>
        <dbReference type="ChEBI" id="CHEBI:29985"/>
        <dbReference type="ChEBI" id="CHEBI:58708"/>
        <dbReference type="ChEBI" id="CHEBI:58710"/>
        <dbReference type="EC" id="2.6.1.87"/>
    </reaction>
</comment>
<comment type="cofactor">
    <cofactor evidence="1">
        <name>pyridoxal 5'-phosphate</name>
        <dbReference type="ChEBI" id="CHEBI:597326"/>
    </cofactor>
</comment>
<comment type="pathway">
    <text evidence="1">Nucleotide-sugar biosynthesis; UDP-4-deoxy-4-formamido-beta-L-arabinose biosynthesis; UDP-4-deoxy-4-formamido-beta-L-arabinose from UDP-alpha-D-glucuronate: step 2/3.</text>
</comment>
<comment type="pathway">
    <text evidence="1">Bacterial outer membrane biogenesis; lipopolysaccharide biosynthesis.</text>
</comment>
<comment type="subunit">
    <text evidence="1">Homodimer.</text>
</comment>
<comment type="similarity">
    <text evidence="1">Belongs to the DegT/DnrJ/EryC1 family. ArnB subfamily.</text>
</comment>
<sequence>MSEFLPFSRPALGDAELAAVGDVLRSGWITTGPKCAQLEQAFCQLTGNRHAIAVSSATGGMHVTLMALGLGPGDEVITPSLTWVSTLNMICLLGAEPIMIDVDRDTLMVTPALIEAAITPRTRAIVPVHYAGAPADIDAIRALGERYGIPVIEDAAHAAGTAYKGRHVGAAGTAIFSFHAIKNMTCAEGGMVVTDDDALAQRIRSLKFHGLAVDAFDRTMQGRAPQAEVITPGYKYNLADINAAIALVQLEKLTQHNARRAALAQRYLHGLADTPFLPLVPPAWEHHHAWHLFIIRVDERWCGIDRDGLMQALKECGIGTGLHFRAAHTQRYYRERFPDMVLPATEWNSVRMCSLPLFPSMNDDDVERVITALRAIAKV</sequence>
<organism>
    <name type="scientific">Sodalis glossinidius (strain morsitans)</name>
    <dbReference type="NCBI Taxonomy" id="343509"/>
    <lineage>
        <taxon>Bacteria</taxon>
        <taxon>Pseudomonadati</taxon>
        <taxon>Pseudomonadota</taxon>
        <taxon>Gammaproteobacteria</taxon>
        <taxon>Enterobacterales</taxon>
        <taxon>Bruguierivoracaceae</taxon>
        <taxon>Sodalis</taxon>
    </lineage>
</organism>
<accession>Q2NRV5</accession>
<keyword id="KW-0032">Aminotransferase</keyword>
<keyword id="KW-0046">Antibiotic resistance</keyword>
<keyword id="KW-0441">Lipid A biosynthesis</keyword>
<keyword id="KW-0444">Lipid biosynthesis</keyword>
<keyword id="KW-0443">Lipid metabolism</keyword>
<keyword id="KW-0448">Lipopolysaccharide biosynthesis</keyword>
<keyword id="KW-0663">Pyridoxal phosphate</keyword>
<keyword id="KW-0808">Transferase</keyword>
<evidence type="ECO:0000255" key="1">
    <source>
        <dbReference type="HAMAP-Rule" id="MF_01167"/>
    </source>
</evidence>
<dbReference type="EC" id="2.6.1.87" evidence="1"/>
<dbReference type="EMBL" id="AP008232">
    <property type="protein sequence ID" value="BAE75120.1"/>
    <property type="molecule type" value="Genomic_DNA"/>
</dbReference>
<dbReference type="RefSeq" id="WP_011411792.1">
    <property type="nucleotide sequence ID" value="NC_007712.1"/>
</dbReference>
<dbReference type="SMR" id="Q2NRV5"/>
<dbReference type="STRING" id="343509.SG1845"/>
<dbReference type="KEGG" id="sgl:SG1845"/>
<dbReference type="eggNOG" id="COG0399">
    <property type="taxonomic scope" value="Bacteria"/>
</dbReference>
<dbReference type="HOGENOM" id="CLU_033332_0_3_6"/>
<dbReference type="OrthoDB" id="9804264at2"/>
<dbReference type="BioCyc" id="SGLO343509:SGP1_RS16695-MONOMER"/>
<dbReference type="UniPathway" id="UPA00030"/>
<dbReference type="UniPathway" id="UPA00032">
    <property type="reaction ID" value="UER00493"/>
</dbReference>
<dbReference type="Proteomes" id="UP000001932">
    <property type="component" value="Chromosome"/>
</dbReference>
<dbReference type="GO" id="GO:0016020">
    <property type="term" value="C:membrane"/>
    <property type="evidence" value="ECO:0007669"/>
    <property type="project" value="GOC"/>
</dbReference>
<dbReference type="GO" id="GO:0030170">
    <property type="term" value="F:pyridoxal phosphate binding"/>
    <property type="evidence" value="ECO:0007669"/>
    <property type="project" value="TreeGrafter"/>
</dbReference>
<dbReference type="GO" id="GO:0099620">
    <property type="term" value="F:UDP-4-amino-4-deoxy-L-arabinose aminotransferase"/>
    <property type="evidence" value="ECO:0007669"/>
    <property type="project" value="UniProtKB-EC"/>
</dbReference>
<dbReference type="GO" id="GO:0009245">
    <property type="term" value="P:lipid A biosynthetic process"/>
    <property type="evidence" value="ECO:0007669"/>
    <property type="project" value="UniProtKB-KW"/>
</dbReference>
<dbReference type="GO" id="GO:0009103">
    <property type="term" value="P:lipopolysaccharide biosynthetic process"/>
    <property type="evidence" value="ECO:0007669"/>
    <property type="project" value="UniProtKB-UniRule"/>
</dbReference>
<dbReference type="GO" id="GO:0046677">
    <property type="term" value="P:response to antibiotic"/>
    <property type="evidence" value="ECO:0007669"/>
    <property type="project" value="UniProtKB-KW"/>
</dbReference>
<dbReference type="CDD" id="cd00616">
    <property type="entry name" value="AHBA_syn"/>
    <property type="match status" value="1"/>
</dbReference>
<dbReference type="FunFam" id="3.40.640.10:FF:000040">
    <property type="entry name" value="UDP-4-amino-4-deoxy-L-arabinose--oxoglutarate aminotransferase"/>
    <property type="match status" value="1"/>
</dbReference>
<dbReference type="FunFam" id="3.90.1150.10:FF:000030">
    <property type="entry name" value="UDP-4-amino-4-deoxy-L-arabinose--oxoglutarate aminotransferase"/>
    <property type="match status" value="1"/>
</dbReference>
<dbReference type="Gene3D" id="3.90.1150.10">
    <property type="entry name" value="Aspartate Aminotransferase, domain 1"/>
    <property type="match status" value="1"/>
</dbReference>
<dbReference type="Gene3D" id="3.40.640.10">
    <property type="entry name" value="Type I PLP-dependent aspartate aminotransferase-like (Major domain)"/>
    <property type="match status" value="1"/>
</dbReference>
<dbReference type="HAMAP" id="MF_01167">
    <property type="entry name" value="ArnB_transfer"/>
    <property type="match status" value="1"/>
</dbReference>
<dbReference type="InterPro" id="IPR022850">
    <property type="entry name" value="ArnB_NH2Trfase"/>
</dbReference>
<dbReference type="InterPro" id="IPR000653">
    <property type="entry name" value="DegT/StrS_aminotransferase"/>
</dbReference>
<dbReference type="InterPro" id="IPR015424">
    <property type="entry name" value="PyrdxlP-dep_Trfase"/>
</dbReference>
<dbReference type="InterPro" id="IPR015421">
    <property type="entry name" value="PyrdxlP-dep_Trfase_major"/>
</dbReference>
<dbReference type="InterPro" id="IPR015422">
    <property type="entry name" value="PyrdxlP-dep_Trfase_small"/>
</dbReference>
<dbReference type="NCBIfam" id="NF008658">
    <property type="entry name" value="PRK11658.1"/>
    <property type="match status" value="1"/>
</dbReference>
<dbReference type="PANTHER" id="PTHR30244">
    <property type="entry name" value="TRANSAMINASE"/>
    <property type="match status" value="1"/>
</dbReference>
<dbReference type="PANTHER" id="PTHR30244:SF41">
    <property type="entry name" value="UDP-4-AMINO-4-DEOXY-L-ARABINOSE--OXOGLUTARATE AMINOTRANSFERASE"/>
    <property type="match status" value="1"/>
</dbReference>
<dbReference type="Pfam" id="PF01041">
    <property type="entry name" value="DegT_DnrJ_EryC1"/>
    <property type="match status" value="1"/>
</dbReference>
<dbReference type="PIRSF" id="PIRSF000390">
    <property type="entry name" value="PLP_StrS"/>
    <property type="match status" value="1"/>
</dbReference>
<dbReference type="SUPFAM" id="SSF53383">
    <property type="entry name" value="PLP-dependent transferases"/>
    <property type="match status" value="1"/>
</dbReference>
<protein>
    <recommendedName>
        <fullName evidence="1">UDP-4-amino-4-deoxy-L-arabinose--oxoglutarate aminotransferase</fullName>
        <ecNumber evidence="1">2.6.1.87</ecNumber>
    </recommendedName>
    <alternativeName>
        <fullName evidence="1">UDP-(beta-L-threo-pentapyranosyl-4''-ulose diphosphate) aminotransferase</fullName>
        <shortName evidence="1">UDP-Ara4O aminotransferase</shortName>
    </alternativeName>
    <alternativeName>
        <fullName evidence="1">UDP-4-amino-4-deoxy-L-arabinose aminotransferase</fullName>
    </alternativeName>
</protein>
<gene>
    <name evidence="1" type="primary">arnB</name>
    <name type="ordered locus">SG1845</name>
</gene>
<proteinExistence type="inferred from homology"/>